<evidence type="ECO:0000255" key="1"/>
<evidence type="ECO:0000269" key="2">
    <source>
    </source>
</evidence>
<evidence type="ECO:0000305" key="3"/>
<evidence type="ECO:0000305" key="4">
    <source>
    </source>
</evidence>
<evidence type="ECO:0007829" key="5">
    <source>
        <dbReference type="PDB" id="4DVE"/>
    </source>
</evidence>
<sequence>MTNNQKVKTLTYSAFMTAFIIILGFLPGIPIGFIPVPIILQNMGIMMAGGLLGPKYGTISVGAFLALALIGLPVLTGGNGGAASFLGPSGGYRIAWLFTPFLIGFFLKKLKITTSQNWFGELIIVLLFGVIFVDFVGAIWLSFQSNIPLLTSLISNLVFIPGDCIKAILTVVIVRRLRKQGGFELYFRK</sequence>
<comment type="function">
    <text>Probably a biotin-binding protein that interacts with the energy-coupling factor (ECF) ABC-transporter complex. Unlike classic ABC transporters this ECF transporter provides the energy necessary to transport a number of different substrates. The substrates themselves are bound by transmembrane, not extracytoplasmic soluble proteins.</text>
</comment>
<comment type="subunit">
    <text evidence="2">In E.coli forms a stable energy-coupling factor (ECF) transporter complex composed of 2 membrane-embedded substrate-binding protein (S component), 2 ATP-binding proteins (A and A' components) and 2 transmembrane proteins (T component), probably with a stoichiometry of 2:1:1:2. May be able to interact with more than 1 S component at a time.</text>
</comment>
<comment type="subcellular location">
    <subcellularLocation>
        <location evidence="4">Cell membrane</location>
        <topology evidence="4">Multi-pass membrane protein</topology>
    </subcellularLocation>
</comment>
<comment type="similarity">
    <text evidence="3">Belongs to the BioY family.</text>
</comment>
<protein>
    <recommendedName>
        <fullName>Biotin transporter BioY</fullName>
    </recommendedName>
    <alternativeName>
        <fullName>Biotin ECF transporter S component BioY</fullName>
    </alternativeName>
</protein>
<name>BIOY_LACLM</name>
<feature type="chain" id="PRO_0000409004" description="Biotin transporter BioY">
    <location>
        <begin position="1"/>
        <end position="189"/>
    </location>
</feature>
<feature type="transmembrane region" description="Helical" evidence="1">
    <location>
        <begin position="19"/>
        <end position="39"/>
    </location>
</feature>
<feature type="transmembrane region" description="Helical" evidence="1">
    <location>
        <begin position="57"/>
        <end position="77"/>
    </location>
</feature>
<feature type="transmembrane region" description="Helical" evidence="1">
    <location>
        <begin position="85"/>
        <end position="105"/>
    </location>
</feature>
<feature type="transmembrane region" description="Helical" evidence="1">
    <location>
        <begin position="123"/>
        <end position="143"/>
    </location>
</feature>
<feature type="transmembrane region" description="Helical" evidence="1">
    <location>
        <begin position="154"/>
        <end position="174"/>
    </location>
</feature>
<feature type="helix" evidence="5">
    <location>
        <begin position="3"/>
        <end position="23"/>
    </location>
</feature>
<feature type="strand" evidence="5">
    <location>
        <begin position="32"/>
        <end position="35"/>
    </location>
</feature>
<feature type="helix" evidence="5">
    <location>
        <begin position="42"/>
        <end position="70"/>
    </location>
</feature>
<feature type="turn" evidence="5">
    <location>
        <begin position="76"/>
        <end position="78"/>
    </location>
</feature>
<feature type="helix" evidence="5">
    <location>
        <begin position="83"/>
        <end position="86"/>
    </location>
</feature>
<feature type="helix" evidence="5">
    <location>
        <begin position="90"/>
        <end position="109"/>
    </location>
</feature>
<feature type="helix" evidence="5">
    <location>
        <begin position="112"/>
        <end position="114"/>
    </location>
</feature>
<feature type="helix" evidence="5">
    <location>
        <begin position="118"/>
        <end position="129"/>
    </location>
</feature>
<feature type="helix" evidence="5">
    <location>
        <begin position="131"/>
        <end position="145"/>
    </location>
</feature>
<feature type="helix" evidence="5">
    <location>
        <begin position="149"/>
        <end position="155"/>
    </location>
</feature>
<feature type="helix" evidence="5">
    <location>
        <begin position="156"/>
        <end position="159"/>
    </location>
</feature>
<feature type="helix" evidence="5">
    <location>
        <begin position="160"/>
        <end position="179"/>
    </location>
</feature>
<feature type="helix" evidence="5">
    <location>
        <begin position="184"/>
        <end position="187"/>
    </location>
</feature>
<dbReference type="EMBL" id="AM406671">
    <property type="protein sequence ID" value="CAL98532.1"/>
    <property type="molecule type" value="Genomic_DNA"/>
</dbReference>
<dbReference type="RefSeq" id="WP_011835704.1">
    <property type="nucleotide sequence ID" value="NC_009004.1"/>
</dbReference>
<dbReference type="PDB" id="4DVE">
    <property type="method" value="X-ray"/>
    <property type="resolution" value="2.09 A"/>
    <property type="chains" value="A/B/C=2-188"/>
</dbReference>
<dbReference type="PDBsum" id="4DVE"/>
<dbReference type="SMR" id="A2RMJ9"/>
<dbReference type="STRING" id="416870.llmg_1964"/>
<dbReference type="TCDB" id="3.A.1.25.4">
    <property type="family name" value="the atp-binding cassette (abc) superfamily"/>
</dbReference>
<dbReference type="KEGG" id="llm:llmg_1964"/>
<dbReference type="eggNOG" id="COG1268">
    <property type="taxonomic scope" value="Bacteria"/>
</dbReference>
<dbReference type="HOGENOM" id="CLU_077931_0_1_9"/>
<dbReference type="OrthoDB" id="9803495at2"/>
<dbReference type="PhylomeDB" id="A2RMJ9"/>
<dbReference type="EvolutionaryTrace" id="A2RMJ9"/>
<dbReference type="Proteomes" id="UP000000364">
    <property type="component" value="Chromosome"/>
</dbReference>
<dbReference type="GO" id="GO:0005886">
    <property type="term" value="C:plasma membrane"/>
    <property type="evidence" value="ECO:0000314"/>
    <property type="project" value="UniProtKB"/>
</dbReference>
<dbReference type="GO" id="GO:0015225">
    <property type="term" value="F:biotin transmembrane transporter activity"/>
    <property type="evidence" value="ECO:0007669"/>
    <property type="project" value="InterPro"/>
</dbReference>
<dbReference type="Gene3D" id="1.10.1760.20">
    <property type="match status" value="1"/>
</dbReference>
<dbReference type="InterPro" id="IPR003784">
    <property type="entry name" value="BioY"/>
</dbReference>
<dbReference type="PANTHER" id="PTHR34295">
    <property type="entry name" value="BIOTIN TRANSPORTER BIOY"/>
    <property type="match status" value="1"/>
</dbReference>
<dbReference type="PANTHER" id="PTHR34295:SF4">
    <property type="entry name" value="BIOTIN TRANSPORTER BIOY-RELATED"/>
    <property type="match status" value="1"/>
</dbReference>
<dbReference type="Pfam" id="PF02632">
    <property type="entry name" value="BioY"/>
    <property type="match status" value="1"/>
</dbReference>
<dbReference type="PIRSF" id="PIRSF016661">
    <property type="entry name" value="BioY"/>
    <property type="match status" value="1"/>
</dbReference>
<organism>
    <name type="scientific">Lactococcus lactis subsp. cremoris (strain MG1363)</name>
    <dbReference type="NCBI Taxonomy" id="416870"/>
    <lineage>
        <taxon>Bacteria</taxon>
        <taxon>Bacillati</taxon>
        <taxon>Bacillota</taxon>
        <taxon>Bacilli</taxon>
        <taxon>Lactobacillales</taxon>
        <taxon>Streptococcaceae</taxon>
        <taxon>Lactococcus</taxon>
        <taxon>Lactococcus cremoris subsp. cremoris</taxon>
    </lineage>
</organism>
<gene>
    <name type="primary">bioY</name>
    <name type="ordered locus">llmg_1964</name>
</gene>
<reference key="1">
    <citation type="journal article" date="2007" name="J. Bacteriol.">
        <title>The complete genome sequence of the lactic acid bacterial paradigm Lactococcus lactis subsp. cremoris MG1363.</title>
        <authorList>
            <person name="Wegmann U."/>
            <person name="O'Connell-Motherway M."/>
            <person name="Zomer A."/>
            <person name="Buist G."/>
            <person name="Shearman C."/>
            <person name="Canchaya C."/>
            <person name="Ventura M."/>
            <person name="Goesmann A."/>
            <person name="Gasson M.J."/>
            <person name="Kuipers O.P."/>
            <person name="van Sinderen D."/>
            <person name="Kok J."/>
        </authorList>
    </citation>
    <scope>NUCLEOTIDE SEQUENCE [LARGE SCALE GENOMIC DNA]</scope>
    <source>
        <strain>MG1363</strain>
    </source>
</reference>
<reference key="2">
    <citation type="journal article" date="2011" name="J. Biol. Chem.">
        <title>Quaternary structure and functional unit of energy coupling factor (ECF)-type transporters.</title>
        <authorList>
            <person name="ter Beek J."/>
            <person name="Duurkens R.H."/>
            <person name="Erkens G.B."/>
            <person name="Slotboom D.J."/>
        </authorList>
    </citation>
    <scope>SUBUNIT</scope>
    <scope>SUBCELLULAR LOCATION</scope>
    <scope>EXPRESSION IN E.COLI</scope>
    <source>
        <strain>MG1363</strain>
    </source>
</reference>
<accession>A2RMJ9</accession>
<proteinExistence type="evidence at protein level"/>
<keyword id="KW-0002">3D-structure</keyword>
<keyword id="KW-1003">Cell membrane</keyword>
<keyword id="KW-0472">Membrane</keyword>
<keyword id="KW-0812">Transmembrane</keyword>
<keyword id="KW-1133">Transmembrane helix</keyword>
<keyword id="KW-0813">Transport</keyword>